<organism>
    <name type="scientific">Zymomonas mobilis subsp. mobilis (strain ATCC 31821 / ZM4 / CP4)</name>
    <dbReference type="NCBI Taxonomy" id="264203"/>
    <lineage>
        <taxon>Bacteria</taxon>
        <taxon>Pseudomonadati</taxon>
        <taxon>Pseudomonadota</taxon>
        <taxon>Alphaproteobacteria</taxon>
        <taxon>Sphingomonadales</taxon>
        <taxon>Zymomonadaceae</taxon>
        <taxon>Zymomonas</taxon>
    </lineage>
</organism>
<name>RBFA_ZYMMO</name>
<evidence type="ECO:0000255" key="1">
    <source>
        <dbReference type="HAMAP-Rule" id="MF_00003"/>
    </source>
</evidence>
<evidence type="ECO:0000256" key="2">
    <source>
        <dbReference type="SAM" id="MobiDB-lite"/>
    </source>
</evidence>
<feature type="chain" id="PRO_0000102780" description="Ribosome-binding factor A">
    <location>
        <begin position="1"/>
        <end position="141"/>
    </location>
</feature>
<feature type="region of interest" description="Disordered" evidence="2">
    <location>
        <begin position="120"/>
        <end position="141"/>
    </location>
</feature>
<feature type="compositionally biased region" description="Acidic residues" evidence="2">
    <location>
        <begin position="129"/>
        <end position="141"/>
    </location>
</feature>
<protein>
    <recommendedName>
        <fullName evidence="1">Ribosome-binding factor A</fullName>
    </recommendedName>
</protein>
<dbReference type="EMBL" id="AE008692">
    <property type="protein sequence ID" value="AAV89177.1"/>
    <property type="molecule type" value="Genomic_DNA"/>
</dbReference>
<dbReference type="RefSeq" id="WP_011240459.1">
    <property type="nucleotide sequence ID" value="NZ_CP035711.1"/>
</dbReference>
<dbReference type="SMR" id="Q5NQ28"/>
<dbReference type="STRING" id="264203.ZMO0553"/>
<dbReference type="KEGG" id="zmo:ZMO0553"/>
<dbReference type="eggNOG" id="COG0858">
    <property type="taxonomic scope" value="Bacteria"/>
</dbReference>
<dbReference type="HOGENOM" id="CLU_089475_1_0_5"/>
<dbReference type="Proteomes" id="UP000001173">
    <property type="component" value="Chromosome"/>
</dbReference>
<dbReference type="GO" id="GO:0005829">
    <property type="term" value="C:cytosol"/>
    <property type="evidence" value="ECO:0007669"/>
    <property type="project" value="TreeGrafter"/>
</dbReference>
<dbReference type="GO" id="GO:0043024">
    <property type="term" value="F:ribosomal small subunit binding"/>
    <property type="evidence" value="ECO:0007669"/>
    <property type="project" value="TreeGrafter"/>
</dbReference>
<dbReference type="GO" id="GO:0030490">
    <property type="term" value="P:maturation of SSU-rRNA"/>
    <property type="evidence" value="ECO:0007669"/>
    <property type="project" value="UniProtKB-UniRule"/>
</dbReference>
<dbReference type="Gene3D" id="3.30.300.20">
    <property type="match status" value="1"/>
</dbReference>
<dbReference type="HAMAP" id="MF_00003">
    <property type="entry name" value="RbfA"/>
    <property type="match status" value="1"/>
</dbReference>
<dbReference type="InterPro" id="IPR015946">
    <property type="entry name" value="KH_dom-like_a/b"/>
</dbReference>
<dbReference type="InterPro" id="IPR000238">
    <property type="entry name" value="RbfA"/>
</dbReference>
<dbReference type="InterPro" id="IPR023799">
    <property type="entry name" value="RbfA_dom_sf"/>
</dbReference>
<dbReference type="InterPro" id="IPR020053">
    <property type="entry name" value="Ribosome-bd_factorA_CS"/>
</dbReference>
<dbReference type="NCBIfam" id="NF001802">
    <property type="entry name" value="PRK00521.2-5"/>
    <property type="match status" value="1"/>
</dbReference>
<dbReference type="NCBIfam" id="TIGR00082">
    <property type="entry name" value="rbfA"/>
    <property type="match status" value="1"/>
</dbReference>
<dbReference type="PANTHER" id="PTHR33515">
    <property type="entry name" value="RIBOSOME-BINDING FACTOR A, CHLOROPLASTIC-RELATED"/>
    <property type="match status" value="1"/>
</dbReference>
<dbReference type="PANTHER" id="PTHR33515:SF1">
    <property type="entry name" value="RIBOSOME-BINDING FACTOR A, CHLOROPLASTIC-RELATED"/>
    <property type="match status" value="1"/>
</dbReference>
<dbReference type="Pfam" id="PF02033">
    <property type="entry name" value="RBFA"/>
    <property type="match status" value="1"/>
</dbReference>
<dbReference type="SUPFAM" id="SSF89919">
    <property type="entry name" value="Ribosome-binding factor A, RbfA"/>
    <property type="match status" value="1"/>
</dbReference>
<dbReference type="PROSITE" id="PS01319">
    <property type="entry name" value="RBFA"/>
    <property type="match status" value="1"/>
</dbReference>
<sequence length="141" mass="15855">MRRNQTPEGHSIRPLRVGEQIRHVLAEMLMRGEIHGDTLDNLFVSISEVRMTPDLRIATVFVKSLGGASDDTVIGILSKNASFLQAAIAKKIRLKYVPKLRFLADESFEQGSRIDSLLRSPHVQRDLQENDDQEDDSEGSL</sequence>
<reference key="1">
    <citation type="journal article" date="2005" name="Nat. Biotechnol.">
        <title>The genome sequence of the ethanologenic bacterium Zymomonas mobilis ZM4.</title>
        <authorList>
            <person name="Seo J.-S."/>
            <person name="Chong H."/>
            <person name="Park H.S."/>
            <person name="Yoon K.-O."/>
            <person name="Jung C."/>
            <person name="Kim J.J."/>
            <person name="Hong J.H."/>
            <person name="Kim H."/>
            <person name="Kim J.-H."/>
            <person name="Kil J.-I."/>
            <person name="Park C.J."/>
            <person name="Oh H.-M."/>
            <person name="Lee J.-S."/>
            <person name="Jin S.-J."/>
            <person name="Um H.-W."/>
            <person name="Lee H.-J."/>
            <person name="Oh S.-J."/>
            <person name="Kim J.Y."/>
            <person name="Kang H.L."/>
            <person name="Lee S.Y."/>
            <person name="Lee K.J."/>
            <person name="Kang H.S."/>
        </authorList>
    </citation>
    <scope>NUCLEOTIDE SEQUENCE [LARGE SCALE GENOMIC DNA]</scope>
    <source>
        <strain>ATCC 31821 / ZM4 / CP4</strain>
    </source>
</reference>
<gene>
    <name evidence="1" type="primary">rbfA</name>
    <name type="ordered locus">ZMO0553</name>
</gene>
<comment type="function">
    <text evidence="1">One of several proteins that assist in the late maturation steps of the functional core of the 30S ribosomal subunit. Associates with free 30S ribosomal subunits (but not with 30S subunits that are part of 70S ribosomes or polysomes). Required for efficient processing of 16S rRNA. May interact with the 5'-terminal helix region of 16S rRNA.</text>
</comment>
<comment type="subunit">
    <text evidence="1">Monomer. Binds 30S ribosomal subunits, but not 50S ribosomal subunits or 70S ribosomes.</text>
</comment>
<comment type="subcellular location">
    <subcellularLocation>
        <location evidence="1">Cytoplasm</location>
    </subcellularLocation>
</comment>
<comment type="similarity">
    <text evidence="1">Belongs to the RbfA family.</text>
</comment>
<accession>Q5NQ28</accession>
<keyword id="KW-0963">Cytoplasm</keyword>
<keyword id="KW-1185">Reference proteome</keyword>
<keyword id="KW-0690">Ribosome biogenesis</keyword>
<proteinExistence type="inferred from homology"/>